<proteinExistence type="evidence at protein level"/>
<name>AL3A1_HUMAN</name>
<organism>
    <name type="scientific">Homo sapiens</name>
    <name type="common">Human</name>
    <dbReference type="NCBI Taxonomy" id="9606"/>
    <lineage>
        <taxon>Eukaryota</taxon>
        <taxon>Metazoa</taxon>
        <taxon>Chordata</taxon>
        <taxon>Craniata</taxon>
        <taxon>Vertebrata</taxon>
        <taxon>Euteleostomi</taxon>
        <taxon>Mammalia</taxon>
        <taxon>Eutheria</taxon>
        <taxon>Euarchontoglires</taxon>
        <taxon>Primates</taxon>
        <taxon>Haplorrhini</taxon>
        <taxon>Catarrhini</taxon>
        <taxon>Hominidae</taxon>
        <taxon>Homo</taxon>
    </lineage>
</organism>
<evidence type="ECO:0000250" key="1"/>
<evidence type="ECO:0000250" key="2">
    <source>
        <dbReference type="UniProtKB" id="P47739"/>
    </source>
</evidence>
<evidence type="ECO:0000269" key="3">
    <source>
    </source>
</evidence>
<evidence type="ECO:0000269" key="4">
    <source>
    </source>
</evidence>
<evidence type="ECO:0000269" key="5">
    <source>
    </source>
</evidence>
<evidence type="ECO:0000269" key="6">
    <source>
    </source>
</evidence>
<evidence type="ECO:0000269" key="7">
    <source>
    </source>
</evidence>
<evidence type="ECO:0000269" key="8">
    <source ref="1"/>
</evidence>
<evidence type="ECO:0000269" key="9">
    <source ref="4"/>
</evidence>
<evidence type="ECO:0000269" key="10">
    <source ref="7"/>
</evidence>
<evidence type="ECO:0000305" key="11"/>
<evidence type="ECO:0007744" key="12">
    <source>
    </source>
</evidence>
<evidence type="ECO:0007744" key="13">
    <source>
    </source>
</evidence>
<evidence type="ECO:0007829" key="14">
    <source>
        <dbReference type="PDB" id="3SZA"/>
    </source>
</evidence>
<evidence type="ECO:0007829" key="15">
    <source>
        <dbReference type="PDB" id="4L2O"/>
    </source>
</evidence>
<accession>P30838</accession>
<accession>A8K828</accession>
<accession>Q9BT37</accession>
<protein>
    <recommendedName>
        <fullName>Aldehyde dehydrogenase, dimeric NADP-preferring</fullName>
        <ecNumber evidence="5 6">1.2.1.5</ecNumber>
    </recommendedName>
    <alternativeName>
        <fullName>ALDHIII</fullName>
    </alternativeName>
    <alternativeName>
        <fullName>Aldehyde dehydrogenase 3</fullName>
    </alternativeName>
    <alternativeName>
        <fullName>Aldehyde dehydrogenase family 3 member A1</fullName>
    </alternativeName>
</protein>
<sequence>MSKISEAVKRARAAFSSGRTRPLQFRIQQLEALQRLIQEQEQELVGALAADLHKNEWNAYYEEVVYVLEEIEYMIQKLPEWAADEPVEKTPQTQQDELYIHSEPLGVVLVIGTWNYPFNLTIQPMVGAIAAGNSVVLKPSELSENMASLLATIIPQYLDKDLYPVINGGVPETTELLKERFDHILYTGSTGVGKIIMTAAAKHLTPVTLELGGKSPCYVDKNCDLDVACRRIAWGKFMNSGQTCVAPDYILCDPSIQNQIVEKLKKSLKEFYGEDAKKSRDYGRIISARHFQRVMGLIEGQKVAYGGTGDAATRYIAPTILTDVDPQSPVMQEEIFGPVLPIVCVRSLEEAIQFINQREKPLALYMFSSNDKVIKKMIAETSSGGVAANDVIVHITLHSLPFGGVGNSGMGSYHGKKSFETFSHRRSCLVRPLMNDEGLKVRYPPSPAKMTQH</sequence>
<dbReference type="EC" id="1.2.1.5" evidence="5 6"/>
<dbReference type="EMBL" id="M74542">
    <property type="protein sequence ID" value="AAA51696.1"/>
    <property type="molecule type" value="mRNA"/>
</dbReference>
<dbReference type="EMBL" id="M77477">
    <property type="protein sequence ID" value="AAB46377.1"/>
    <property type="molecule type" value="mRNA"/>
</dbReference>
<dbReference type="EMBL" id="S61044">
    <property type="protein sequence ID" value="AAB26658.1"/>
    <property type="molecule type" value="mRNA"/>
</dbReference>
<dbReference type="EMBL" id="BT007102">
    <property type="protein sequence ID" value="AAP35766.1"/>
    <property type="molecule type" value="mRNA"/>
</dbReference>
<dbReference type="EMBL" id="AK292193">
    <property type="protein sequence ID" value="BAF84882.1"/>
    <property type="molecule type" value="mRNA"/>
</dbReference>
<dbReference type="EMBL" id="AK314584">
    <property type="protein sequence ID" value="BAG37160.1"/>
    <property type="molecule type" value="mRNA"/>
</dbReference>
<dbReference type="EMBL" id="AC005722">
    <property type="status" value="NOT_ANNOTATED_CDS"/>
    <property type="molecule type" value="Genomic_DNA"/>
</dbReference>
<dbReference type="EMBL" id="CH471212">
    <property type="protein sequence ID" value="EAW50909.1"/>
    <property type="molecule type" value="Genomic_DNA"/>
</dbReference>
<dbReference type="EMBL" id="BC004370">
    <property type="protein sequence ID" value="AAH04370.1"/>
    <property type="molecule type" value="mRNA"/>
</dbReference>
<dbReference type="EMBL" id="BC008892">
    <property type="protein sequence ID" value="AAH08892.1"/>
    <property type="molecule type" value="mRNA"/>
</dbReference>
<dbReference type="EMBL" id="BC021194">
    <property type="protein sequence ID" value="AAH21194.1"/>
    <property type="molecule type" value="mRNA"/>
</dbReference>
<dbReference type="CCDS" id="CCDS11212.1"/>
<dbReference type="PIR" id="A42584">
    <property type="entry name" value="A42584"/>
</dbReference>
<dbReference type="RefSeq" id="NP_000682.3">
    <property type="nucleotide sequence ID" value="NM_000691.4"/>
</dbReference>
<dbReference type="RefSeq" id="NP_001128639.1">
    <property type="nucleotide sequence ID" value="NM_001135167.1"/>
</dbReference>
<dbReference type="RefSeq" id="NP_001128640.1">
    <property type="nucleotide sequence ID" value="NM_001135168.1"/>
</dbReference>
<dbReference type="PDB" id="3SZA">
    <property type="method" value="X-ray"/>
    <property type="resolution" value="1.48 A"/>
    <property type="chains" value="A/B=1-453"/>
</dbReference>
<dbReference type="PDB" id="3SZB">
    <property type="method" value="X-ray"/>
    <property type="resolution" value="1.51 A"/>
    <property type="chains" value="A/B=1-453"/>
</dbReference>
<dbReference type="PDB" id="4H80">
    <property type="method" value="X-ray"/>
    <property type="resolution" value="2.50 A"/>
    <property type="chains" value="A/B/C/D/E/F/G/H=1-453"/>
</dbReference>
<dbReference type="PDB" id="4L1O">
    <property type="method" value="X-ray"/>
    <property type="resolution" value="2.30 A"/>
    <property type="chains" value="A/B=1-453"/>
</dbReference>
<dbReference type="PDB" id="4L2O">
    <property type="method" value="X-ray"/>
    <property type="resolution" value="1.94 A"/>
    <property type="chains" value="A/B/E/G=1-453"/>
</dbReference>
<dbReference type="PDB" id="8BB8">
    <property type="method" value="X-ray"/>
    <property type="resolution" value="1.80 A"/>
    <property type="chains" value="A/B=2-453"/>
</dbReference>
<dbReference type="PDBsum" id="3SZA"/>
<dbReference type="PDBsum" id="3SZB"/>
<dbReference type="PDBsum" id="4H80"/>
<dbReference type="PDBsum" id="4L1O"/>
<dbReference type="PDBsum" id="4L2O"/>
<dbReference type="PDBsum" id="8BB8"/>
<dbReference type="SMR" id="P30838"/>
<dbReference type="BioGRID" id="106720">
    <property type="interactions" value="94"/>
</dbReference>
<dbReference type="FunCoup" id="P30838">
    <property type="interactions" value="537"/>
</dbReference>
<dbReference type="IntAct" id="P30838">
    <property type="interactions" value="59"/>
</dbReference>
<dbReference type="STRING" id="9606.ENSP00000411821"/>
<dbReference type="BindingDB" id="P30838"/>
<dbReference type="ChEMBL" id="CHEMBL3578"/>
<dbReference type="DrugBank" id="DB00157">
    <property type="generic name" value="NADH"/>
</dbReference>
<dbReference type="GlyGen" id="P30838">
    <property type="glycosylation" value="1 site, 1 O-linked glycan (1 site)"/>
</dbReference>
<dbReference type="iPTMnet" id="P30838"/>
<dbReference type="PhosphoSitePlus" id="P30838"/>
<dbReference type="SwissPalm" id="P30838"/>
<dbReference type="BioMuta" id="ALDH3A1"/>
<dbReference type="DMDM" id="311033473"/>
<dbReference type="jPOST" id="P30838"/>
<dbReference type="MassIVE" id="P30838"/>
<dbReference type="PaxDb" id="9606-ENSP00000411821"/>
<dbReference type="PeptideAtlas" id="P30838"/>
<dbReference type="PRIDE" id="P30838"/>
<dbReference type="ProteomicsDB" id="54741"/>
<dbReference type="Pumba" id="P30838"/>
<dbReference type="Antibodypedia" id="26030">
    <property type="antibodies" value="476 antibodies from 39 providers"/>
</dbReference>
<dbReference type="DNASU" id="218"/>
<dbReference type="Ensembl" id="ENST00000225740.11">
    <property type="protein sequence ID" value="ENSP00000225740.6"/>
    <property type="gene ID" value="ENSG00000108602.18"/>
</dbReference>
<dbReference type="Ensembl" id="ENST00000444455.5">
    <property type="protein sequence ID" value="ENSP00000388469.1"/>
    <property type="gene ID" value="ENSG00000108602.18"/>
</dbReference>
<dbReference type="Ensembl" id="ENST00000457500.6">
    <property type="protein sequence ID" value="ENSP00000411821.2"/>
    <property type="gene ID" value="ENSG00000108602.18"/>
</dbReference>
<dbReference type="GeneID" id="218"/>
<dbReference type="KEGG" id="hsa:218"/>
<dbReference type="MANE-Select" id="ENST00000225740.11">
    <property type="protein sequence ID" value="ENSP00000225740.6"/>
    <property type="RefSeq nucleotide sequence ID" value="NM_000691.5"/>
    <property type="RefSeq protein sequence ID" value="NP_000682.3"/>
</dbReference>
<dbReference type="UCSC" id="uc002gwj.4">
    <property type="organism name" value="human"/>
</dbReference>
<dbReference type="AGR" id="HGNC:405"/>
<dbReference type="CTD" id="218"/>
<dbReference type="DisGeNET" id="218"/>
<dbReference type="GeneCards" id="ALDH3A1"/>
<dbReference type="HGNC" id="HGNC:405">
    <property type="gene designation" value="ALDH3A1"/>
</dbReference>
<dbReference type="HPA" id="ENSG00000108602">
    <property type="expression patterns" value="Tissue enhanced (esophagus, salivary gland, stomach)"/>
</dbReference>
<dbReference type="MIM" id="100660">
    <property type="type" value="gene"/>
</dbReference>
<dbReference type="neXtProt" id="NX_P30838"/>
<dbReference type="OpenTargets" id="ENSG00000108602"/>
<dbReference type="PharmGKB" id="PA24697"/>
<dbReference type="VEuPathDB" id="HostDB:ENSG00000108602"/>
<dbReference type="eggNOG" id="KOG2456">
    <property type="taxonomic scope" value="Eukaryota"/>
</dbReference>
<dbReference type="GeneTree" id="ENSGT00940000162101"/>
<dbReference type="InParanoid" id="P30838"/>
<dbReference type="OMA" id="PCIQGQV"/>
<dbReference type="OrthoDB" id="440325at2759"/>
<dbReference type="PAN-GO" id="P30838">
    <property type="GO annotations" value="3 GO annotations based on evolutionary models"/>
</dbReference>
<dbReference type="PhylomeDB" id="P30838"/>
<dbReference type="TreeFam" id="TF314264"/>
<dbReference type="BRENDA" id="1.2.1.5">
    <property type="organism ID" value="2681"/>
</dbReference>
<dbReference type="PathwayCommons" id="P30838"/>
<dbReference type="Reactome" id="R-HSA-211945">
    <property type="pathway name" value="Phase I - Functionalization of compounds"/>
</dbReference>
<dbReference type="SABIO-RK" id="P30838"/>
<dbReference type="SignaLink" id="P30838"/>
<dbReference type="SIGNOR" id="P30838"/>
<dbReference type="BioGRID-ORCS" id="218">
    <property type="hits" value="15 hits in 1156 CRISPR screens"/>
</dbReference>
<dbReference type="ChiTaRS" id="ALDH3A1">
    <property type="organism name" value="human"/>
</dbReference>
<dbReference type="EvolutionaryTrace" id="P30838"/>
<dbReference type="GeneWiki" id="Aldehyde_dehydrogenase_3_family,_member_A1"/>
<dbReference type="GenomeRNAi" id="218"/>
<dbReference type="Pharos" id="P30838">
    <property type="development level" value="Tchem"/>
</dbReference>
<dbReference type="PRO" id="PR:P30838"/>
<dbReference type="Proteomes" id="UP000005640">
    <property type="component" value="Chromosome 17"/>
</dbReference>
<dbReference type="RNAct" id="P30838">
    <property type="molecule type" value="protein"/>
</dbReference>
<dbReference type="Bgee" id="ENSG00000108602">
    <property type="expression patterns" value="Expressed in nasal cavity epithelium and 151 other cell types or tissues"/>
</dbReference>
<dbReference type="ExpressionAtlas" id="P30838">
    <property type="expression patterns" value="baseline and differential"/>
</dbReference>
<dbReference type="GO" id="GO:0005737">
    <property type="term" value="C:cytoplasm"/>
    <property type="evidence" value="ECO:0000318"/>
    <property type="project" value="GO_Central"/>
</dbReference>
<dbReference type="GO" id="GO:0005829">
    <property type="term" value="C:cytosol"/>
    <property type="evidence" value="ECO:0000314"/>
    <property type="project" value="HPA"/>
</dbReference>
<dbReference type="GO" id="GO:0005783">
    <property type="term" value="C:endoplasmic reticulum"/>
    <property type="evidence" value="ECO:0000314"/>
    <property type="project" value="LIFEdb"/>
</dbReference>
<dbReference type="GO" id="GO:0005615">
    <property type="term" value="C:extracellular space"/>
    <property type="evidence" value="ECO:0007005"/>
    <property type="project" value="UniProtKB"/>
</dbReference>
<dbReference type="GO" id="GO:0005886">
    <property type="term" value="C:plasma membrane"/>
    <property type="evidence" value="ECO:0000314"/>
    <property type="project" value="HPA"/>
</dbReference>
<dbReference type="GO" id="GO:0004028">
    <property type="term" value="F:3-chloroallyl aldehyde dehydrogenase activity"/>
    <property type="evidence" value="ECO:0000318"/>
    <property type="project" value="GO_Central"/>
</dbReference>
<dbReference type="GO" id="GO:0008106">
    <property type="term" value="F:alcohol dehydrogenase (NADP+) activity"/>
    <property type="evidence" value="ECO:0000314"/>
    <property type="project" value="UniProtKB"/>
</dbReference>
<dbReference type="GO" id="GO:0004029">
    <property type="term" value="F:aldehyde dehydrogenase (NAD+) activity"/>
    <property type="evidence" value="ECO:0000314"/>
    <property type="project" value="UniProtKB"/>
</dbReference>
<dbReference type="GO" id="GO:0004030">
    <property type="term" value="F:aldehyde dehydrogenase [NAD(P)+] activity"/>
    <property type="evidence" value="ECO:0000304"/>
    <property type="project" value="Reactome"/>
</dbReference>
<dbReference type="GO" id="GO:0018479">
    <property type="term" value="F:benzaldehyde dehydrogenase (NAD+) activity"/>
    <property type="evidence" value="ECO:0000314"/>
    <property type="project" value="CACAO"/>
</dbReference>
<dbReference type="GO" id="GO:0006081">
    <property type="term" value="P:aldehyde metabolic process"/>
    <property type="evidence" value="ECO:0000314"/>
    <property type="project" value="UniProtKB"/>
</dbReference>
<dbReference type="GO" id="GO:0006629">
    <property type="term" value="P:lipid metabolic process"/>
    <property type="evidence" value="ECO:0007669"/>
    <property type="project" value="UniProtKB-KW"/>
</dbReference>
<dbReference type="GO" id="GO:0006805">
    <property type="term" value="P:xenobiotic metabolic process"/>
    <property type="evidence" value="ECO:0000304"/>
    <property type="project" value="Reactome"/>
</dbReference>
<dbReference type="CDD" id="cd07132">
    <property type="entry name" value="ALDH_F3AB"/>
    <property type="match status" value="1"/>
</dbReference>
<dbReference type="FunFam" id="3.40.309.10:FF:000003">
    <property type="entry name" value="Aldehyde dehydrogenase"/>
    <property type="match status" value="1"/>
</dbReference>
<dbReference type="FunFam" id="3.40.605.10:FF:000004">
    <property type="entry name" value="Aldehyde dehydrogenase"/>
    <property type="match status" value="1"/>
</dbReference>
<dbReference type="Gene3D" id="3.40.605.10">
    <property type="entry name" value="Aldehyde Dehydrogenase, Chain A, domain 1"/>
    <property type="match status" value="1"/>
</dbReference>
<dbReference type="Gene3D" id="3.40.309.10">
    <property type="entry name" value="Aldehyde Dehydrogenase, Chain A, domain 2"/>
    <property type="match status" value="1"/>
</dbReference>
<dbReference type="InterPro" id="IPR016161">
    <property type="entry name" value="Ald_DH/histidinol_DH"/>
</dbReference>
<dbReference type="InterPro" id="IPR016163">
    <property type="entry name" value="Ald_DH_C"/>
</dbReference>
<dbReference type="InterPro" id="IPR016160">
    <property type="entry name" value="Ald_DH_CS_CYS"/>
</dbReference>
<dbReference type="InterPro" id="IPR029510">
    <property type="entry name" value="Ald_DH_CS_GLU"/>
</dbReference>
<dbReference type="InterPro" id="IPR016162">
    <property type="entry name" value="Ald_DH_N"/>
</dbReference>
<dbReference type="InterPro" id="IPR015590">
    <property type="entry name" value="Aldehyde_DH_dom"/>
</dbReference>
<dbReference type="InterPro" id="IPR012394">
    <property type="entry name" value="Aldehyde_DH_NAD(P)"/>
</dbReference>
<dbReference type="PANTHER" id="PTHR43570">
    <property type="entry name" value="ALDEHYDE DEHYDROGENASE"/>
    <property type="match status" value="1"/>
</dbReference>
<dbReference type="PANTHER" id="PTHR43570:SF15">
    <property type="entry name" value="ALDEHYDE DEHYDROGENASE, DIMERIC NADP-PREFERRING"/>
    <property type="match status" value="1"/>
</dbReference>
<dbReference type="Pfam" id="PF00171">
    <property type="entry name" value="Aldedh"/>
    <property type="match status" value="1"/>
</dbReference>
<dbReference type="PIRSF" id="PIRSF036492">
    <property type="entry name" value="ALDH"/>
    <property type="match status" value="1"/>
</dbReference>
<dbReference type="SUPFAM" id="SSF53720">
    <property type="entry name" value="ALDH-like"/>
    <property type="match status" value="1"/>
</dbReference>
<dbReference type="PROSITE" id="PS00070">
    <property type="entry name" value="ALDEHYDE_DEHYDR_CYS"/>
    <property type="match status" value="1"/>
</dbReference>
<dbReference type="PROSITE" id="PS00687">
    <property type="entry name" value="ALDEHYDE_DEHYDR_GLU"/>
    <property type="match status" value="1"/>
</dbReference>
<reference key="1">
    <citation type="submission" date="1991-08" db="EMBL/GenBank/DDBJ databases">
        <title>Cloning and complete nucleotide sequence of a cDNA encoding the full-length open reading frame of the human aldehyde dehydrogenase type III gene.</title>
        <authorList>
            <person name="Schuuring E.M.D."/>
            <person name="Verhoeven E."/>
            <person name="Eckey R."/>
            <person name="Vos H.L."/>
            <person name="Michalides R.J.A."/>
        </authorList>
    </citation>
    <scope>NUCLEOTIDE SEQUENCE [MRNA]</scope>
    <scope>VARIANT ALA-134</scope>
    <source>
        <tissue>Stomach</tissue>
    </source>
</reference>
<reference key="2">
    <citation type="journal article" date="1992" name="J. Biol. Chem.">
        <title>Human stomach aldehyde dehydrogenase cDNA and genomic cloning, primary structure, and expression in Escherichia coli.</title>
        <authorList>
            <person name="Hsu L.C."/>
            <person name="Chang W.-C."/>
            <person name="Shibuya A."/>
            <person name="Yoshida A."/>
        </authorList>
    </citation>
    <scope>NUCLEOTIDE SEQUENCE [MRNA]</scope>
    <scope>FUNCTION</scope>
    <scope>CATALYTIC ACTIVITY</scope>
    <source>
        <tissue>Stomach</tissue>
    </source>
</reference>
<reference key="3">
    <citation type="journal article" date="1993" name="Adv. Exp. Med. Biol.">
        <title>Human stomach aldehyde dehydrogenase, ALDH3.</title>
        <authorList>
            <person name="Hsu L.C."/>
            <person name="Yoshida A."/>
        </authorList>
    </citation>
    <scope>NUCLEOTIDE SEQUENCE [MRNA]</scope>
    <source>
        <tissue>Stomach</tissue>
    </source>
</reference>
<reference key="4">
    <citation type="submission" date="2003-05" db="EMBL/GenBank/DDBJ databases">
        <title>Cloning of human full-length CDSs in BD Creator(TM) system donor vector.</title>
        <authorList>
            <person name="Kalnine N."/>
            <person name="Chen X."/>
            <person name="Rolfs A."/>
            <person name="Halleck A."/>
            <person name="Hines L."/>
            <person name="Eisenstein S."/>
            <person name="Koundinya M."/>
            <person name="Raphael J."/>
            <person name="Moreira D."/>
            <person name="Kelley T."/>
            <person name="LaBaer J."/>
            <person name="Lin Y."/>
            <person name="Phelan M."/>
            <person name="Farmer A."/>
        </authorList>
    </citation>
    <scope>NUCLEOTIDE SEQUENCE [LARGE SCALE MRNA]</scope>
    <scope>VARIANT ALA-134</scope>
</reference>
<reference key="5">
    <citation type="journal article" date="2004" name="Nat. Genet.">
        <title>Complete sequencing and characterization of 21,243 full-length human cDNAs.</title>
        <authorList>
            <person name="Ota T."/>
            <person name="Suzuki Y."/>
            <person name="Nishikawa T."/>
            <person name="Otsuki T."/>
            <person name="Sugiyama T."/>
            <person name="Irie R."/>
            <person name="Wakamatsu A."/>
            <person name="Hayashi K."/>
            <person name="Sato H."/>
            <person name="Nagai K."/>
            <person name="Kimura K."/>
            <person name="Makita H."/>
            <person name="Sekine M."/>
            <person name="Obayashi M."/>
            <person name="Nishi T."/>
            <person name="Shibahara T."/>
            <person name="Tanaka T."/>
            <person name="Ishii S."/>
            <person name="Yamamoto J."/>
            <person name="Saito K."/>
            <person name="Kawai Y."/>
            <person name="Isono Y."/>
            <person name="Nakamura Y."/>
            <person name="Nagahari K."/>
            <person name="Murakami K."/>
            <person name="Yasuda T."/>
            <person name="Iwayanagi T."/>
            <person name="Wagatsuma M."/>
            <person name="Shiratori A."/>
            <person name="Sudo H."/>
            <person name="Hosoiri T."/>
            <person name="Kaku Y."/>
            <person name="Kodaira H."/>
            <person name="Kondo H."/>
            <person name="Sugawara M."/>
            <person name="Takahashi M."/>
            <person name="Kanda K."/>
            <person name="Yokoi T."/>
            <person name="Furuya T."/>
            <person name="Kikkawa E."/>
            <person name="Omura Y."/>
            <person name="Abe K."/>
            <person name="Kamihara K."/>
            <person name="Katsuta N."/>
            <person name="Sato K."/>
            <person name="Tanikawa M."/>
            <person name="Yamazaki M."/>
            <person name="Ninomiya K."/>
            <person name="Ishibashi T."/>
            <person name="Yamashita H."/>
            <person name="Murakawa K."/>
            <person name="Fujimori K."/>
            <person name="Tanai H."/>
            <person name="Kimata M."/>
            <person name="Watanabe M."/>
            <person name="Hiraoka S."/>
            <person name="Chiba Y."/>
            <person name="Ishida S."/>
            <person name="Ono Y."/>
            <person name="Takiguchi S."/>
            <person name="Watanabe S."/>
            <person name="Yosida M."/>
            <person name="Hotuta T."/>
            <person name="Kusano J."/>
            <person name="Kanehori K."/>
            <person name="Takahashi-Fujii A."/>
            <person name="Hara H."/>
            <person name="Tanase T.-O."/>
            <person name="Nomura Y."/>
            <person name="Togiya S."/>
            <person name="Komai F."/>
            <person name="Hara R."/>
            <person name="Takeuchi K."/>
            <person name="Arita M."/>
            <person name="Imose N."/>
            <person name="Musashino K."/>
            <person name="Yuuki H."/>
            <person name="Oshima A."/>
            <person name="Sasaki N."/>
            <person name="Aotsuka S."/>
            <person name="Yoshikawa Y."/>
            <person name="Matsunawa H."/>
            <person name="Ichihara T."/>
            <person name="Shiohata N."/>
            <person name="Sano S."/>
            <person name="Moriya S."/>
            <person name="Momiyama H."/>
            <person name="Satoh N."/>
            <person name="Takami S."/>
            <person name="Terashima Y."/>
            <person name="Suzuki O."/>
            <person name="Nakagawa S."/>
            <person name="Senoh A."/>
            <person name="Mizoguchi H."/>
            <person name="Goto Y."/>
            <person name="Shimizu F."/>
            <person name="Wakebe H."/>
            <person name="Hishigaki H."/>
            <person name="Watanabe T."/>
            <person name="Sugiyama A."/>
            <person name="Takemoto M."/>
            <person name="Kawakami B."/>
            <person name="Yamazaki M."/>
            <person name="Watanabe K."/>
            <person name="Kumagai A."/>
            <person name="Itakura S."/>
            <person name="Fukuzumi Y."/>
            <person name="Fujimori Y."/>
            <person name="Komiyama M."/>
            <person name="Tashiro H."/>
            <person name="Tanigami A."/>
            <person name="Fujiwara T."/>
            <person name="Ono T."/>
            <person name="Yamada K."/>
            <person name="Fujii Y."/>
            <person name="Ozaki K."/>
            <person name="Hirao M."/>
            <person name="Ohmori Y."/>
            <person name="Kawabata A."/>
            <person name="Hikiji T."/>
            <person name="Kobatake N."/>
            <person name="Inagaki H."/>
            <person name="Ikema Y."/>
            <person name="Okamoto S."/>
            <person name="Okitani R."/>
            <person name="Kawakami T."/>
            <person name="Noguchi S."/>
            <person name="Itoh T."/>
            <person name="Shigeta K."/>
            <person name="Senba T."/>
            <person name="Matsumura K."/>
            <person name="Nakajima Y."/>
            <person name="Mizuno T."/>
            <person name="Morinaga M."/>
            <person name="Sasaki M."/>
            <person name="Togashi T."/>
            <person name="Oyama M."/>
            <person name="Hata H."/>
            <person name="Watanabe M."/>
            <person name="Komatsu T."/>
            <person name="Mizushima-Sugano J."/>
            <person name="Satoh T."/>
            <person name="Shirai Y."/>
            <person name="Takahashi Y."/>
            <person name="Nakagawa K."/>
            <person name="Okumura K."/>
            <person name="Nagase T."/>
            <person name="Nomura N."/>
            <person name="Kikuchi H."/>
            <person name="Masuho Y."/>
            <person name="Yamashita R."/>
            <person name="Nakai K."/>
            <person name="Yada T."/>
            <person name="Nakamura Y."/>
            <person name="Ohara O."/>
            <person name="Isogai T."/>
            <person name="Sugano S."/>
        </authorList>
    </citation>
    <scope>NUCLEOTIDE SEQUENCE [LARGE SCALE MRNA]</scope>
    <scope>VARIANT ALA-134</scope>
    <source>
        <tissue>Cervix</tissue>
        <tissue>Tongue</tissue>
    </source>
</reference>
<reference key="6">
    <citation type="journal article" date="2006" name="Nature">
        <title>DNA sequence of human chromosome 17 and analysis of rearrangement in the human lineage.</title>
        <authorList>
            <person name="Zody M.C."/>
            <person name="Garber M."/>
            <person name="Adams D.J."/>
            <person name="Sharpe T."/>
            <person name="Harrow J."/>
            <person name="Lupski J.R."/>
            <person name="Nicholson C."/>
            <person name="Searle S.M."/>
            <person name="Wilming L."/>
            <person name="Young S.K."/>
            <person name="Abouelleil A."/>
            <person name="Allen N.R."/>
            <person name="Bi W."/>
            <person name="Bloom T."/>
            <person name="Borowsky M.L."/>
            <person name="Bugalter B.E."/>
            <person name="Butler J."/>
            <person name="Chang J.L."/>
            <person name="Chen C.-K."/>
            <person name="Cook A."/>
            <person name="Corum B."/>
            <person name="Cuomo C.A."/>
            <person name="de Jong P.J."/>
            <person name="DeCaprio D."/>
            <person name="Dewar K."/>
            <person name="FitzGerald M."/>
            <person name="Gilbert J."/>
            <person name="Gibson R."/>
            <person name="Gnerre S."/>
            <person name="Goldstein S."/>
            <person name="Grafham D.V."/>
            <person name="Grocock R."/>
            <person name="Hafez N."/>
            <person name="Hagopian D.S."/>
            <person name="Hart E."/>
            <person name="Norman C.H."/>
            <person name="Humphray S."/>
            <person name="Jaffe D.B."/>
            <person name="Jones M."/>
            <person name="Kamal M."/>
            <person name="Khodiyar V.K."/>
            <person name="LaButti K."/>
            <person name="Laird G."/>
            <person name="Lehoczky J."/>
            <person name="Liu X."/>
            <person name="Lokyitsang T."/>
            <person name="Loveland J."/>
            <person name="Lui A."/>
            <person name="Macdonald P."/>
            <person name="Major J.E."/>
            <person name="Matthews L."/>
            <person name="Mauceli E."/>
            <person name="McCarroll S.A."/>
            <person name="Mihalev A.H."/>
            <person name="Mudge J."/>
            <person name="Nguyen C."/>
            <person name="Nicol R."/>
            <person name="O'Leary S.B."/>
            <person name="Osoegawa K."/>
            <person name="Schwartz D.C."/>
            <person name="Shaw-Smith C."/>
            <person name="Stankiewicz P."/>
            <person name="Steward C."/>
            <person name="Swarbreck D."/>
            <person name="Venkataraman V."/>
            <person name="Whittaker C.A."/>
            <person name="Yang X."/>
            <person name="Zimmer A.R."/>
            <person name="Bradley A."/>
            <person name="Hubbard T."/>
            <person name="Birren B.W."/>
            <person name="Rogers J."/>
            <person name="Lander E.S."/>
            <person name="Nusbaum C."/>
        </authorList>
    </citation>
    <scope>NUCLEOTIDE SEQUENCE [LARGE SCALE GENOMIC DNA]</scope>
</reference>
<reference key="7">
    <citation type="submission" date="2005-07" db="EMBL/GenBank/DDBJ databases">
        <authorList>
            <person name="Mural R.J."/>
            <person name="Istrail S."/>
            <person name="Sutton G."/>
            <person name="Florea L."/>
            <person name="Halpern A.L."/>
            <person name="Mobarry C.M."/>
            <person name="Lippert R."/>
            <person name="Walenz B."/>
            <person name="Shatkay H."/>
            <person name="Dew I."/>
            <person name="Miller J.R."/>
            <person name="Flanigan M.J."/>
            <person name="Edwards N.J."/>
            <person name="Bolanos R."/>
            <person name="Fasulo D."/>
            <person name="Halldorsson B.V."/>
            <person name="Hannenhalli S."/>
            <person name="Turner R."/>
            <person name="Yooseph S."/>
            <person name="Lu F."/>
            <person name="Nusskern D.R."/>
            <person name="Shue B.C."/>
            <person name="Zheng X.H."/>
            <person name="Zhong F."/>
            <person name="Delcher A.L."/>
            <person name="Huson D.H."/>
            <person name="Kravitz S.A."/>
            <person name="Mouchard L."/>
            <person name="Reinert K."/>
            <person name="Remington K.A."/>
            <person name="Clark A.G."/>
            <person name="Waterman M.S."/>
            <person name="Eichler E.E."/>
            <person name="Adams M.D."/>
            <person name="Hunkapiller M.W."/>
            <person name="Myers E.W."/>
            <person name="Venter J.C."/>
        </authorList>
    </citation>
    <scope>NUCLEOTIDE SEQUENCE [LARGE SCALE GENOMIC DNA]</scope>
    <scope>VARIANT ALA-134</scope>
</reference>
<reference key="8">
    <citation type="journal article" date="2004" name="Genome Res.">
        <title>The status, quality, and expansion of the NIH full-length cDNA project: the Mammalian Gene Collection (MGC).</title>
        <authorList>
            <consortium name="The MGC Project Team"/>
        </authorList>
    </citation>
    <scope>NUCLEOTIDE SEQUENCE [LARGE SCALE MRNA]</scope>
    <scope>VARIANT ALA-134</scope>
    <source>
        <tissue>Pancreas</tissue>
    </source>
</reference>
<reference key="9">
    <citation type="journal article" date="1991" name="FEBS Lett.">
        <title>Structural features of stomach aldehyde dehydrogenase distinguish dimeric aldehyde dehydrogenase as a 'variable' enzyme. 'Variable' and 'constant' enzymes within the alcohol and aldehyde dehydrogenase families.</title>
        <authorList>
            <person name="Yin S.-J."/>
            <person name="Vagelopoulos N."/>
            <person name="Wang S.-L."/>
            <person name="Joernvall H."/>
        </authorList>
    </citation>
    <scope>PROTEIN SEQUENCE OF 62-453</scope>
    <source>
        <tissue>Stomach</tissue>
    </source>
</reference>
<reference key="10">
    <citation type="journal article" date="1991" name="Adv. Exp. Med. Biol.">
        <title>Biochemical, immunological, and molecular characterization of a 'high Km' aldehyde dehydrogenase.</title>
        <authorList>
            <person name="Eckey R."/>
            <person name="Timmann R."/>
            <person name="Hempel J."/>
            <person name="Agarwal D.P."/>
            <person name="Goedde H.W."/>
        </authorList>
    </citation>
    <scope>CHARACTERIZATION</scope>
</reference>
<reference key="11">
    <citation type="journal article" date="2009" name="Science">
        <title>Lysine acetylation targets protein complexes and co-regulates major cellular functions.</title>
        <authorList>
            <person name="Choudhary C."/>
            <person name="Kumar C."/>
            <person name="Gnad F."/>
            <person name="Nielsen M.L."/>
            <person name="Rehman M."/>
            <person name="Walther T.C."/>
            <person name="Olsen J.V."/>
            <person name="Mann M."/>
        </authorList>
    </citation>
    <scope>ACETYLATION [LARGE SCALE ANALYSIS] AT LYS-178 AND LYS-194</scope>
    <scope>IDENTIFICATION BY MASS SPECTROMETRY [LARGE SCALE ANALYSIS]</scope>
</reference>
<reference key="12">
    <citation type="journal article" date="2011" name="BMC Syst. Biol.">
        <title>Initial characterization of the human central proteome.</title>
        <authorList>
            <person name="Burkard T.R."/>
            <person name="Planyavsky M."/>
            <person name="Kaupe I."/>
            <person name="Breitwieser F.P."/>
            <person name="Buerckstuemmer T."/>
            <person name="Bennett K.L."/>
            <person name="Superti-Furga G."/>
            <person name="Colinge J."/>
        </authorList>
    </citation>
    <scope>IDENTIFICATION BY MASS SPECTROMETRY [LARGE SCALE ANALYSIS]</scope>
</reference>
<reference key="13">
    <citation type="journal article" date="2012" name="Proc. Natl. Acad. Sci. U.S.A.">
        <title>N-terminal acetylome analyses and functional insights of the N-terminal acetyltransferase NatB.</title>
        <authorList>
            <person name="Van Damme P."/>
            <person name="Lasa M."/>
            <person name="Polevoda B."/>
            <person name="Gazquez C."/>
            <person name="Elosegui-Artola A."/>
            <person name="Kim D.S."/>
            <person name="De Juan-Pardo E."/>
            <person name="Demeyer K."/>
            <person name="Hole K."/>
            <person name="Larrea E."/>
            <person name="Timmerman E."/>
            <person name="Prieto J."/>
            <person name="Arnesen T."/>
            <person name="Sherman F."/>
            <person name="Gevaert K."/>
            <person name="Aldabe R."/>
        </authorList>
    </citation>
    <scope>ACETYLATION [LARGE SCALE ANALYSIS] AT SER-2</scope>
    <scope>CLEAVAGE OF INITIATOR METHIONINE [LARGE SCALE ANALYSIS]</scope>
    <scope>IDENTIFICATION BY MASS SPECTROMETRY [LARGE SCALE ANALYSIS]</scope>
</reference>
<reference key="14">
    <citation type="journal article" date="2011" name="J. Biol. Chem.">
        <title>Discovery of a novel class of covalent inhibitor for aldehyde dehydrogenases.</title>
        <authorList>
            <person name="Khanna M."/>
            <person name="Chen C.H."/>
            <person name="Kimble-Hill A."/>
            <person name="Parajuli B."/>
            <person name="Perez-Miller S."/>
            <person name="Baskaran S."/>
            <person name="Kim J."/>
            <person name="Dria K."/>
            <person name="Vasiliou V."/>
            <person name="Mochly-Rosen D."/>
            <person name="Hurley T.D."/>
        </authorList>
    </citation>
    <scope>X-RAY CRYSTALLOGRAPHY (1.48 ANGSTROMS) IN COMPLEX WITH INHIBITOR</scope>
    <scope>CATALYTIC ACTIVITY</scope>
    <scope>MUTAGENESIS OF CYS-244</scope>
    <scope>ACTIVE SITE</scope>
</reference>
<reference key="15">
    <citation type="journal article" date="1997" name="Ann. Hum. Genet.">
        <title>Mutations associated with Sjogren-Larsson syndrome.</title>
        <authorList>
            <person name="Tsukamoto N."/>
            <person name="Chang C."/>
            <person name="Yoshida A."/>
        </authorList>
    </citation>
    <scope>VARIANT ALA-329</scope>
</reference>
<comment type="function">
    <text evidence="2 5 11">ALDHs play a major role in the detoxification of alcohol-derived acetaldehyde (Probable). They are involved in the metabolism of corticosteroids, biogenic amines, neurotransmitters, and lipid peroxidation (Probable). Oxidizes medium and long chain aldehydes into non-toxic fatty acids (PubMed:1737758). Preferentially oxidizes aromatic aldehyde substrates (PubMed:1737758). Comprises about 50 percent of corneal epithelial soluble proteins (By similarity). May play a role in preventing corneal damage caused by ultraviolet light (By similarity).</text>
</comment>
<comment type="catalytic activity">
    <reaction evidence="5 6">
        <text>an aldehyde + NAD(+) + H2O = a carboxylate + NADH + 2 H(+)</text>
        <dbReference type="Rhea" id="RHEA:16185"/>
        <dbReference type="ChEBI" id="CHEBI:15377"/>
        <dbReference type="ChEBI" id="CHEBI:15378"/>
        <dbReference type="ChEBI" id="CHEBI:17478"/>
        <dbReference type="ChEBI" id="CHEBI:29067"/>
        <dbReference type="ChEBI" id="CHEBI:57540"/>
        <dbReference type="ChEBI" id="CHEBI:57945"/>
        <dbReference type="EC" id="1.2.1.5"/>
    </reaction>
</comment>
<comment type="catalytic activity">
    <reaction evidence="2">
        <text>octanal + NAD(+) + H2O = octanoate + NADH + 2 H(+)</text>
        <dbReference type="Rhea" id="RHEA:44100"/>
        <dbReference type="ChEBI" id="CHEBI:15377"/>
        <dbReference type="ChEBI" id="CHEBI:15378"/>
        <dbReference type="ChEBI" id="CHEBI:17935"/>
        <dbReference type="ChEBI" id="CHEBI:25646"/>
        <dbReference type="ChEBI" id="CHEBI:57540"/>
        <dbReference type="ChEBI" id="CHEBI:57945"/>
    </reaction>
</comment>
<comment type="biophysicochemical properties">
    <kinetics>
        <text>Has a high Km for acetaldehyde.</text>
    </kinetics>
</comment>
<comment type="subunit">
    <text evidence="6">Homodimer.</text>
</comment>
<comment type="interaction">
    <interactant intactId="EBI-3905126">
        <id>P30838</id>
    </interactant>
    <interactant intactId="EBI-744771">
        <id>O75344</id>
        <label>FKBP6</label>
    </interactant>
    <organismsDiffer>false</organismsDiffer>
    <experiments>3</experiments>
</comment>
<comment type="interaction">
    <interactant intactId="EBI-3905126">
        <id>P30838</id>
    </interactant>
    <interactant intactId="EBI-752420">
        <id>Q9NUX5</id>
        <label>POT1</label>
    </interactant>
    <organismsDiffer>false</organismsDiffer>
    <experiments>2</experiments>
</comment>
<comment type="subcellular location">
    <subcellularLocation>
        <location evidence="2">Cytoplasm</location>
    </subcellularLocation>
</comment>
<comment type="tissue specificity">
    <text>High levels in stomach, esophagus and lung; low level in the liver and kidney.</text>
</comment>
<comment type="similarity">
    <text evidence="11">Belongs to the aldehyde dehydrogenase family.</text>
</comment>
<keyword id="KW-0002">3D-structure</keyword>
<keyword id="KW-0007">Acetylation</keyword>
<keyword id="KW-0963">Cytoplasm</keyword>
<keyword id="KW-0903">Direct protein sequencing</keyword>
<keyword id="KW-0443">Lipid metabolism</keyword>
<keyword id="KW-0520">NAD</keyword>
<keyword id="KW-0521">NADP</keyword>
<keyword id="KW-0560">Oxidoreductase</keyword>
<keyword id="KW-1267">Proteomics identification</keyword>
<keyword id="KW-1185">Reference proteome</keyword>
<gene>
    <name type="primary">ALDH3A1</name>
    <name type="synonym">ALDH3</name>
</gene>
<feature type="initiator methionine" description="Removed" evidence="13">
    <location>
        <position position="1"/>
    </location>
</feature>
<feature type="chain" id="PRO_0000056470" description="Aldehyde dehydrogenase, dimeric NADP-preferring">
    <location>
        <begin position="2"/>
        <end position="453"/>
    </location>
</feature>
<feature type="active site" evidence="6">
    <location>
        <position position="210"/>
    </location>
</feature>
<feature type="active site" evidence="6">
    <location>
        <position position="244"/>
    </location>
</feature>
<feature type="binding site" evidence="1">
    <location>
        <begin position="188"/>
        <end position="193"/>
    </location>
    <ligand>
        <name>NAD(+)</name>
        <dbReference type="ChEBI" id="CHEBI:57540"/>
    </ligand>
</feature>
<feature type="modified residue" description="N-acetylserine" evidence="13">
    <location>
        <position position="2"/>
    </location>
</feature>
<feature type="modified residue" description="N6-acetyllysine" evidence="12">
    <location>
        <position position="178"/>
    </location>
</feature>
<feature type="modified residue" description="N6-acetyllysine" evidence="12">
    <location>
        <position position="194"/>
    </location>
</feature>
<feature type="sequence variant" id="VAR_018981" description="In dbSNP:rs887241." evidence="3 4 8 9 10">
    <original>S</original>
    <variation>A</variation>
    <location>
        <position position="134"/>
    </location>
</feature>
<feature type="sequence variant" id="VAR_018982" description="In dbSNP:rs3744692.">
    <original>G</original>
    <variation>E</variation>
    <location>
        <position position="309"/>
    </location>
</feature>
<feature type="sequence variant" id="VAR_011303" description="In allele ALDH3A1*2; dbSNP:rs2228100." evidence="7">
    <original>P</original>
    <variation>A</variation>
    <location>
        <position position="329"/>
    </location>
</feature>
<feature type="mutagenesis site" description="Abolishes activity." evidence="6">
    <original>C</original>
    <variation>S</variation>
    <location>
        <position position="244"/>
    </location>
</feature>
<feature type="sequence conflict" description="In Ref. 2; AAB46377 and 3; AAB26658." evidence="11" ref="2 3">
    <original>R</original>
    <variation>P</variation>
    <location>
        <position position="12"/>
    </location>
</feature>
<feature type="sequence conflict" description="In Ref. 1; AAA51696." evidence="11" ref="1">
    <original>I</original>
    <variation>F</variation>
    <location>
        <position position="27"/>
    </location>
</feature>
<feature type="sequence conflict" description="In Ref. 9; AA sequence." evidence="11" ref="9">
    <original>V</original>
    <variation>L</variation>
    <location>
        <position position="170"/>
    </location>
</feature>
<feature type="sequence conflict" description="In Ref. 9; AA sequence." evidence="11" ref="9">
    <original>D</original>
    <variation>E</variation>
    <location>
        <position position="436"/>
    </location>
</feature>
<feature type="helix" evidence="14">
    <location>
        <begin position="3"/>
        <end position="16"/>
    </location>
</feature>
<feature type="turn" evidence="14">
    <location>
        <begin position="17"/>
        <end position="20"/>
    </location>
</feature>
<feature type="helix" evidence="14">
    <location>
        <begin position="23"/>
        <end position="39"/>
    </location>
</feature>
<feature type="helix" evidence="14">
    <location>
        <begin position="41"/>
        <end position="52"/>
    </location>
</feature>
<feature type="helix" evidence="14">
    <location>
        <begin position="56"/>
        <end position="61"/>
    </location>
</feature>
<feature type="helix" evidence="14">
    <location>
        <begin position="64"/>
        <end position="82"/>
    </location>
</feature>
<feature type="helix" evidence="14">
    <location>
        <begin position="91"/>
        <end position="93"/>
    </location>
</feature>
<feature type="strand" evidence="14">
    <location>
        <begin position="96"/>
        <end position="104"/>
    </location>
</feature>
<feature type="strand" evidence="14">
    <location>
        <begin position="106"/>
        <end position="111"/>
    </location>
</feature>
<feature type="strand" evidence="14">
    <location>
        <begin position="114"/>
        <end position="116"/>
    </location>
</feature>
<feature type="helix" evidence="14">
    <location>
        <begin position="119"/>
        <end position="130"/>
    </location>
</feature>
<feature type="strand" evidence="14">
    <location>
        <begin position="134"/>
        <end position="138"/>
    </location>
</feature>
<feature type="strand" evidence="15">
    <location>
        <begin position="141"/>
        <end position="143"/>
    </location>
</feature>
<feature type="helix" evidence="14">
    <location>
        <begin position="144"/>
        <end position="157"/>
    </location>
</feature>
<feature type="turn" evidence="14">
    <location>
        <begin position="160"/>
        <end position="162"/>
    </location>
</feature>
<feature type="helix" evidence="14">
    <location>
        <begin position="170"/>
        <end position="176"/>
    </location>
</feature>
<feature type="strand" evidence="14">
    <location>
        <begin position="182"/>
        <end position="188"/>
    </location>
</feature>
<feature type="helix" evidence="14">
    <location>
        <begin position="190"/>
        <end position="201"/>
    </location>
</feature>
<feature type="turn" evidence="14">
    <location>
        <begin position="202"/>
        <end position="204"/>
    </location>
</feature>
<feature type="strand" evidence="14">
    <location>
        <begin position="207"/>
        <end position="210"/>
    </location>
</feature>
<feature type="strand" evidence="14">
    <location>
        <begin position="216"/>
        <end position="219"/>
    </location>
</feature>
<feature type="helix" evidence="14">
    <location>
        <begin position="225"/>
        <end position="237"/>
    </location>
</feature>
<feature type="helix" evidence="14">
    <location>
        <begin position="238"/>
        <end position="241"/>
    </location>
</feature>
<feature type="strand" evidence="14">
    <location>
        <begin position="249"/>
        <end position="252"/>
    </location>
</feature>
<feature type="helix" evidence="14">
    <location>
        <begin position="254"/>
        <end position="256"/>
    </location>
</feature>
<feature type="helix" evidence="14">
    <location>
        <begin position="257"/>
        <end position="272"/>
    </location>
</feature>
<feature type="helix" evidence="14">
    <location>
        <begin position="276"/>
        <end position="278"/>
    </location>
</feature>
<feature type="helix" evidence="14">
    <location>
        <begin position="288"/>
        <end position="298"/>
    </location>
</feature>
<feature type="strand" evidence="14">
    <location>
        <begin position="301"/>
        <end position="305"/>
    </location>
</feature>
<feature type="turn" evidence="14">
    <location>
        <begin position="311"/>
        <end position="314"/>
    </location>
</feature>
<feature type="strand" evidence="14">
    <location>
        <begin position="319"/>
        <end position="323"/>
    </location>
</feature>
<feature type="helix" evidence="14">
    <location>
        <begin position="329"/>
        <end position="331"/>
    </location>
</feature>
<feature type="strand" evidence="14">
    <location>
        <begin position="337"/>
        <end position="344"/>
    </location>
</feature>
<feature type="helix" evidence="14">
    <location>
        <begin position="348"/>
        <end position="357"/>
    </location>
</feature>
<feature type="strand" evidence="14">
    <location>
        <begin position="362"/>
        <end position="367"/>
    </location>
</feature>
<feature type="helix" evidence="14">
    <location>
        <begin position="371"/>
        <end position="380"/>
    </location>
</feature>
<feature type="strand" evidence="14">
    <location>
        <begin position="384"/>
        <end position="389"/>
    </location>
</feature>
<feature type="helix" evidence="14">
    <location>
        <begin position="393"/>
        <end position="395"/>
    </location>
</feature>
<feature type="helix" evidence="14">
    <location>
        <begin position="406"/>
        <end position="408"/>
    </location>
</feature>
<feature type="helix" evidence="14">
    <location>
        <begin position="416"/>
        <end position="421"/>
    </location>
</feature>
<feature type="strand" evidence="14">
    <location>
        <begin position="423"/>
        <end position="430"/>
    </location>
</feature>
<feature type="helix" evidence="14">
    <location>
        <begin position="437"/>
        <end position="442"/>
    </location>
</feature>
<feature type="strand" evidence="14">
    <location>
        <begin position="443"/>
        <end position="445"/>
    </location>
</feature>